<protein>
    <recommendedName>
        <fullName>FAD assembly factor SdhE</fullName>
    </recommendedName>
</protein>
<proteinExistence type="inferred from homology"/>
<organism>
    <name type="scientific">Francisella tularensis subsp. tularensis (strain SCHU S4 / Schu 4)</name>
    <dbReference type="NCBI Taxonomy" id="177416"/>
    <lineage>
        <taxon>Bacteria</taxon>
        <taxon>Pseudomonadati</taxon>
        <taxon>Pseudomonadota</taxon>
        <taxon>Gammaproteobacteria</taxon>
        <taxon>Thiotrichales</taxon>
        <taxon>Francisellaceae</taxon>
        <taxon>Francisella</taxon>
    </lineage>
</organism>
<feature type="chain" id="PRO_0000214398" description="FAD assembly factor SdhE">
    <location>
        <begin position="1"/>
        <end position="95"/>
    </location>
</feature>
<reference key="1">
    <citation type="journal article" date="2005" name="Nat. Genet.">
        <title>The complete genome sequence of Francisella tularensis, the causative agent of tularemia.</title>
        <authorList>
            <person name="Larsson P."/>
            <person name="Oyston P.C.F."/>
            <person name="Chain P."/>
            <person name="Chu M.C."/>
            <person name="Duffield M."/>
            <person name="Fuxelius H.-H."/>
            <person name="Garcia E."/>
            <person name="Haelltorp G."/>
            <person name="Johansson D."/>
            <person name="Isherwood K.E."/>
            <person name="Karp P.D."/>
            <person name="Larsson E."/>
            <person name="Liu Y."/>
            <person name="Michell S."/>
            <person name="Prior J."/>
            <person name="Prior R."/>
            <person name="Malfatti S."/>
            <person name="Sjoestedt A."/>
            <person name="Svensson K."/>
            <person name="Thompson N."/>
            <person name="Vergez L."/>
            <person name="Wagg J.K."/>
            <person name="Wren B.W."/>
            <person name="Lindler L.E."/>
            <person name="Andersson S.G.E."/>
            <person name="Forsman M."/>
            <person name="Titball R.W."/>
        </authorList>
    </citation>
    <scope>NUCLEOTIDE SEQUENCE [LARGE SCALE GENOMIC DNA]</scope>
    <source>
        <strain>SCHU S4 / Schu 4</strain>
    </source>
</reference>
<evidence type="ECO:0000250" key="1">
    <source>
        <dbReference type="UniProtKB" id="G4V4G2"/>
    </source>
</evidence>
<evidence type="ECO:0000305" key="2"/>
<gene>
    <name type="primary">sdhE</name>
    <name type="ordered locus">FTT_1151c</name>
</gene>
<sequence length="95" mass="11321">MLIKNNDLIFSSVDKIKYSARRGMLELDIILAPYLNNCYMHEDLANKKLFVEFLTSEDSDMFDWLFKGVTPPQRYQQLIDKIIKEKKKFNQTKLK</sequence>
<dbReference type="EMBL" id="AJ749949">
    <property type="protein sequence ID" value="CAG45784.1"/>
    <property type="molecule type" value="Genomic_DNA"/>
</dbReference>
<dbReference type="RefSeq" id="WP_003018632.1">
    <property type="nucleotide sequence ID" value="NZ_CP010290.1"/>
</dbReference>
<dbReference type="RefSeq" id="YP_170118.1">
    <property type="nucleotide sequence ID" value="NC_006570.2"/>
</dbReference>
<dbReference type="SMR" id="Q5NFS4"/>
<dbReference type="STRING" id="177416.FTT_1151c"/>
<dbReference type="DNASU" id="3191681"/>
<dbReference type="EnsemblBacteria" id="CAG45784">
    <property type="protein sequence ID" value="CAG45784"/>
    <property type="gene ID" value="FTT_1151c"/>
</dbReference>
<dbReference type="KEGG" id="ftu:FTT_1151c"/>
<dbReference type="eggNOG" id="COG2938">
    <property type="taxonomic scope" value="Bacteria"/>
</dbReference>
<dbReference type="OrthoDB" id="9180899at2"/>
<dbReference type="Proteomes" id="UP000001174">
    <property type="component" value="Chromosome"/>
</dbReference>
<dbReference type="GO" id="GO:0005737">
    <property type="term" value="C:cytoplasm"/>
    <property type="evidence" value="ECO:0007669"/>
    <property type="project" value="UniProtKB-SubCell"/>
</dbReference>
<dbReference type="GO" id="GO:0006105">
    <property type="term" value="P:succinate metabolic process"/>
    <property type="evidence" value="ECO:0007669"/>
    <property type="project" value="TreeGrafter"/>
</dbReference>
<dbReference type="Gene3D" id="1.10.150.250">
    <property type="entry name" value="Flavinator of succinate dehydrogenase"/>
    <property type="match status" value="1"/>
</dbReference>
<dbReference type="InterPro" id="IPR005631">
    <property type="entry name" value="SDH"/>
</dbReference>
<dbReference type="InterPro" id="IPR036714">
    <property type="entry name" value="SDH_sf"/>
</dbReference>
<dbReference type="InterPro" id="IPR050531">
    <property type="entry name" value="SdhE_FAD_assembly_factor"/>
</dbReference>
<dbReference type="PANTHER" id="PTHR39585">
    <property type="entry name" value="FAD ASSEMBLY FACTOR SDHE"/>
    <property type="match status" value="1"/>
</dbReference>
<dbReference type="PANTHER" id="PTHR39585:SF1">
    <property type="entry name" value="FAD ASSEMBLY FACTOR SDHE"/>
    <property type="match status" value="1"/>
</dbReference>
<dbReference type="Pfam" id="PF03937">
    <property type="entry name" value="Sdh5"/>
    <property type="match status" value="1"/>
</dbReference>
<dbReference type="SUPFAM" id="SSF109910">
    <property type="entry name" value="YgfY-like"/>
    <property type="match status" value="1"/>
</dbReference>
<comment type="function">
    <text evidence="1">An FAD assembly protein, which accelerates covalent attachment of the cofactor into other proteins. Plays an essential role in the assembly of succinate dehydrogenase (SDH, respiratory complex II), an enzyme complex that is a component of both the tricarboxylic acid cycle and the electron transport chain, and which couples the oxidation of succinate to fumarate with the reduction of ubiquinone (coenzyme Q) to ubiquinol. Required for flavinylation (covalent attachment of FAD) of the flavoprotein subunit SdhA of SDH and other flavinylated proteins as well.</text>
</comment>
<comment type="subcellular location">
    <subcellularLocation>
        <location evidence="1">Cytoplasm</location>
    </subcellularLocation>
</comment>
<comment type="similarity">
    <text evidence="2">Belongs to the SdhE FAD assembly factor family.</text>
</comment>
<keyword id="KW-0143">Chaperone</keyword>
<keyword id="KW-0963">Cytoplasm</keyword>
<keyword id="KW-1185">Reference proteome</keyword>
<name>SDHE_FRATT</name>
<accession>Q5NFS4</accession>